<dbReference type="EMBL" id="AM933172">
    <property type="protein sequence ID" value="CAR34813.1"/>
    <property type="molecule type" value="Genomic_DNA"/>
</dbReference>
<dbReference type="RefSeq" id="WP_000008119.1">
    <property type="nucleotide sequence ID" value="NC_011294.1"/>
</dbReference>
<dbReference type="SMR" id="B5R1E7"/>
<dbReference type="KEGG" id="set:SEN3238"/>
<dbReference type="HOGENOM" id="CLU_095787_0_0_6"/>
<dbReference type="Proteomes" id="UP000000613">
    <property type="component" value="Chromosome"/>
</dbReference>
<dbReference type="GO" id="GO:0005886">
    <property type="term" value="C:plasma membrane"/>
    <property type="evidence" value="ECO:0007669"/>
    <property type="project" value="UniProtKB-SubCell"/>
</dbReference>
<dbReference type="GO" id="GO:0008381">
    <property type="term" value="F:mechanosensitive monoatomic ion channel activity"/>
    <property type="evidence" value="ECO:0007669"/>
    <property type="project" value="UniProtKB-UniRule"/>
</dbReference>
<dbReference type="FunFam" id="1.10.1200.120:FF:000001">
    <property type="entry name" value="Large-conductance mechanosensitive channel"/>
    <property type="match status" value="1"/>
</dbReference>
<dbReference type="Gene3D" id="1.10.1200.120">
    <property type="entry name" value="Large-conductance mechanosensitive channel, MscL, domain 1"/>
    <property type="match status" value="1"/>
</dbReference>
<dbReference type="HAMAP" id="MF_00115">
    <property type="entry name" value="MscL"/>
    <property type="match status" value="1"/>
</dbReference>
<dbReference type="InterPro" id="IPR019823">
    <property type="entry name" value="Mechanosensitive_channel_CS"/>
</dbReference>
<dbReference type="InterPro" id="IPR001185">
    <property type="entry name" value="MS_channel"/>
</dbReference>
<dbReference type="InterPro" id="IPR037673">
    <property type="entry name" value="MSC/AndL"/>
</dbReference>
<dbReference type="InterPro" id="IPR036019">
    <property type="entry name" value="MscL_channel"/>
</dbReference>
<dbReference type="NCBIfam" id="TIGR00220">
    <property type="entry name" value="mscL"/>
    <property type="match status" value="1"/>
</dbReference>
<dbReference type="NCBIfam" id="NF001841">
    <property type="entry name" value="PRK00567.1-1"/>
    <property type="match status" value="1"/>
</dbReference>
<dbReference type="NCBIfam" id="NF001843">
    <property type="entry name" value="PRK00567.1-4"/>
    <property type="match status" value="1"/>
</dbReference>
<dbReference type="PANTHER" id="PTHR30266:SF2">
    <property type="entry name" value="LARGE-CONDUCTANCE MECHANOSENSITIVE CHANNEL"/>
    <property type="match status" value="1"/>
</dbReference>
<dbReference type="PANTHER" id="PTHR30266">
    <property type="entry name" value="MECHANOSENSITIVE CHANNEL MSCL"/>
    <property type="match status" value="1"/>
</dbReference>
<dbReference type="Pfam" id="PF01741">
    <property type="entry name" value="MscL"/>
    <property type="match status" value="1"/>
</dbReference>
<dbReference type="PRINTS" id="PR01264">
    <property type="entry name" value="MECHCHANNEL"/>
</dbReference>
<dbReference type="SUPFAM" id="SSF81330">
    <property type="entry name" value="Gated mechanosensitive channel"/>
    <property type="match status" value="1"/>
</dbReference>
<dbReference type="PROSITE" id="PS01327">
    <property type="entry name" value="MSCL"/>
    <property type="match status" value="1"/>
</dbReference>
<evidence type="ECO:0000255" key="1">
    <source>
        <dbReference type="HAMAP-Rule" id="MF_00115"/>
    </source>
</evidence>
<accession>B5R1E7</accession>
<keyword id="KW-0997">Cell inner membrane</keyword>
<keyword id="KW-1003">Cell membrane</keyword>
<keyword id="KW-0407">Ion channel</keyword>
<keyword id="KW-0406">Ion transport</keyword>
<keyword id="KW-0472">Membrane</keyword>
<keyword id="KW-0812">Transmembrane</keyword>
<keyword id="KW-1133">Transmembrane helix</keyword>
<keyword id="KW-0813">Transport</keyword>
<protein>
    <recommendedName>
        <fullName evidence="1">Large-conductance mechanosensitive channel</fullName>
    </recommendedName>
</protein>
<gene>
    <name evidence="1" type="primary">mscL</name>
    <name type="ordered locus">SEN3238</name>
</gene>
<feature type="chain" id="PRO_1000094921" description="Large-conductance mechanosensitive channel">
    <location>
        <begin position="1"/>
        <end position="137"/>
    </location>
</feature>
<feature type="transmembrane region" description="Helical" evidence="1">
    <location>
        <begin position="10"/>
        <end position="30"/>
    </location>
</feature>
<feature type="transmembrane region" description="Helical" evidence="1">
    <location>
        <begin position="76"/>
        <end position="96"/>
    </location>
</feature>
<organism>
    <name type="scientific">Salmonella enteritidis PT4 (strain P125109)</name>
    <dbReference type="NCBI Taxonomy" id="550537"/>
    <lineage>
        <taxon>Bacteria</taxon>
        <taxon>Pseudomonadati</taxon>
        <taxon>Pseudomonadota</taxon>
        <taxon>Gammaproteobacteria</taxon>
        <taxon>Enterobacterales</taxon>
        <taxon>Enterobacteriaceae</taxon>
        <taxon>Salmonella</taxon>
    </lineage>
</organism>
<reference key="1">
    <citation type="journal article" date="2008" name="Genome Res.">
        <title>Comparative genome analysis of Salmonella enteritidis PT4 and Salmonella gallinarum 287/91 provides insights into evolutionary and host adaptation pathways.</title>
        <authorList>
            <person name="Thomson N.R."/>
            <person name="Clayton D.J."/>
            <person name="Windhorst D."/>
            <person name="Vernikos G."/>
            <person name="Davidson S."/>
            <person name="Churcher C."/>
            <person name="Quail M.A."/>
            <person name="Stevens M."/>
            <person name="Jones M.A."/>
            <person name="Watson M."/>
            <person name="Barron A."/>
            <person name="Layton A."/>
            <person name="Pickard D."/>
            <person name="Kingsley R.A."/>
            <person name="Bignell A."/>
            <person name="Clark L."/>
            <person name="Harris B."/>
            <person name="Ormond D."/>
            <person name="Abdellah Z."/>
            <person name="Brooks K."/>
            <person name="Cherevach I."/>
            <person name="Chillingworth T."/>
            <person name="Woodward J."/>
            <person name="Norberczak H."/>
            <person name="Lord A."/>
            <person name="Arrowsmith C."/>
            <person name="Jagels K."/>
            <person name="Moule S."/>
            <person name="Mungall K."/>
            <person name="Saunders M."/>
            <person name="Whitehead S."/>
            <person name="Chabalgoity J.A."/>
            <person name="Maskell D."/>
            <person name="Humphreys T."/>
            <person name="Roberts M."/>
            <person name="Barrow P.A."/>
            <person name="Dougan G."/>
            <person name="Parkhill J."/>
        </authorList>
    </citation>
    <scope>NUCLEOTIDE SEQUENCE [LARGE SCALE GENOMIC DNA]</scope>
    <source>
        <strain>P125109</strain>
    </source>
</reference>
<name>MSCL_SALEP</name>
<comment type="function">
    <text evidence="1">Channel that opens in response to stretch forces in the membrane lipid bilayer. May participate in the regulation of osmotic pressure changes within the cell.</text>
</comment>
<comment type="subunit">
    <text evidence="1">Homopentamer.</text>
</comment>
<comment type="subcellular location">
    <subcellularLocation>
        <location evidence="1">Cell inner membrane</location>
        <topology evidence="1">Multi-pass membrane protein</topology>
    </subcellularLocation>
</comment>
<comment type="similarity">
    <text evidence="1">Belongs to the MscL family.</text>
</comment>
<sequence>MSFIKEFREFAMRGNVVDLAVGVIIGAAFGKIVSSLVADIIMPPLGLLIGGIDFKQFAFTLREAQGDIPAVVMHYGVFIQNVFDFVIVAFAIFVAIKLINRLNRKKAEEPAAPPAPSKEEVLLGEIRDLLKEQNNRS</sequence>
<proteinExistence type="inferred from homology"/>